<protein>
    <recommendedName>
        <fullName evidence="1">Cysteine/O-acetylserine efflux protein</fullName>
    </recommendedName>
</protein>
<reference key="1">
    <citation type="journal article" date="2001" name="Nature">
        <title>Complete genome sequence of a multiple drug resistant Salmonella enterica serovar Typhi CT18.</title>
        <authorList>
            <person name="Parkhill J."/>
            <person name="Dougan G."/>
            <person name="James K.D."/>
            <person name="Thomson N.R."/>
            <person name="Pickard D."/>
            <person name="Wain J."/>
            <person name="Churcher C.M."/>
            <person name="Mungall K.L."/>
            <person name="Bentley S.D."/>
            <person name="Holden M.T.G."/>
            <person name="Sebaihia M."/>
            <person name="Baker S."/>
            <person name="Basham D."/>
            <person name="Brooks K."/>
            <person name="Chillingworth T."/>
            <person name="Connerton P."/>
            <person name="Cronin A."/>
            <person name="Davis P."/>
            <person name="Davies R.M."/>
            <person name="Dowd L."/>
            <person name="White N."/>
            <person name="Farrar J."/>
            <person name="Feltwell T."/>
            <person name="Hamlin N."/>
            <person name="Haque A."/>
            <person name="Hien T.T."/>
            <person name="Holroyd S."/>
            <person name="Jagels K."/>
            <person name="Krogh A."/>
            <person name="Larsen T.S."/>
            <person name="Leather S."/>
            <person name="Moule S."/>
            <person name="O'Gaora P."/>
            <person name="Parry C."/>
            <person name="Quail M.A."/>
            <person name="Rutherford K.M."/>
            <person name="Simmonds M."/>
            <person name="Skelton J."/>
            <person name="Stevens K."/>
            <person name="Whitehead S."/>
            <person name="Barrell B.G."/>
        </authorList>
    </citation>
    <scope>NUCLEOTIDE SEQUENCE [LARGE SCALE GENOMIC DNA]</scope>
    <source>
        <strain>CT18</strain>
    </source>
</reference>
<reference key="2">
    <citation type="journal article" date="2003" name="J. Bacteriol.">
        <title>Comparative genomics of Salmonella enterica serovar Typhi strains Ty2 and CT18.</title>
        <authorList>
            <person name="Deng W."/>
            <person name="Liou S.-R."/>
            <person name="Plunkett G. III"/>
            <person name="Mayhew G.F."/>
            <person name="Rose D.J."/>
            <person name="Burland V."/>
            <person name="Kodoyianni V."/>
            <person name="Schwartz D.C."/>
            <person name="Blattner F.R."/>
        </authorList>
    </citation>
    <scope>NUCLEOTIDE SEQUENCE [LARGE SCALE GENOMIC DNA]</scope>
    <source>
        <strain>ATCC 700931 / Ty2</strain>
    </source>
</reference>
<gene>
    <name type="primary">eamB</name>
    <name type="ordered locus">STY2838</name>
    <name type="ordered locus">t0265</name>
</gene>
<keyword id="KW-0029">Amino-acid transport</keyword>
<keyword id="KW-0997">Cell inner membrane</keyword>
<keyword id="KW-1003">Cell membrane</keyword>
<keyword id="KW-0472">Membrane</keyword>
<keyword id="KW-0812">Transmembrane</keyword>
<keyword id="KW-1133">Transmembrane helix</keyword>
<keyword id="KW-0813">Transport</keyword>
<organism>
    <name type="scientific">Salmonella typhi</name>
    <dbReference type="NCBI Taxonomy" id="90370"/>
    <lineage>
        <taxon>Bacteria</taxon>
        <taxon>Pseudomonadati</taxon>
        <taxon>Pseudomonadota</taxon>
        <taxon>Gammaproteobacteria</taxon>
        <taxon>Enterobacterales</taxon>
        <taxon>Enterobacteriaceae</taxon>
        <taxon>Salmonella</taxon>
    </lineage>
</organism>
<proteinExistence type="inferred from homology"/>
<name>EAMB_SALTI</name>
<comment type="function">
    <text evidence="1">Exporter of O-acetylserine (OAS) and cysteine.</text>
</comment>
<comment type="catalytic activity">
    <reaction evidence="1">
        <text>O-acetyl-L-serine(in) = O-acetyl-L-serine(out)</text>
        <dbReference type="Rhea" id="RHEA:29659"/>
        <dbReference type="ChEBI" id="CHEBI:58340"/>
    </reaction>
    <physiologicalReaction direction="left-to-right" evidence="1">
        <dbReference type="Rhea" id="RHEA:29660"/>
    </physiologicalReaction>
</comment>
<comment type="catalytic activity">
    <reaction evidence="1">
        <text>L-cysteine(in) = L-cysteine(out)</text>
        <dbReference type="Rhea" id="RHEA:29655"/>
        <dbReference type="ChEBI" id="CHEBI:35235"/>
    </reaction>
    <physiologicalReaction direction="left-to-right" evidence="1">
        <dbReference type="Rhea" id="RHEA:29656"/>
    </physiologicalReaction>
</comment>
<comment type="subcellular location">
    <subcellularLocation>
        <location evidence="1">Cell inner membrane</location>
        <topology evidence="2">Multi-pass membrane protein</topology>
    </subcellularLocation>
</comment>
<comment type="similarity">
    <text evidence="3">Belongs to the Rht family.</text>
</comment>
<sequence length="195" mass="21335">MTPMLLSAFWTYTLITALTPGPNNILALSAATAHGFRQSIRVLAGMSLGFLVVMLLCAGIAFSLAVIDPAIIHLLSWVGAAYILWLAWKIATSPAADEKVRPKPVGFWVSFGLQFVNVKIILYGITALSTFVLPQTQALNWVIGVSILLALIGTFGNVCWALAGHLFQRAFRHYGRQLNIILALLLVYCAVRIFY</sequence>
<dbReference type="EMBL" id="AE014613">
    <property type="protein sequence ID" value="AAO67991.1"/>
    <property type="molecule type" value="Genomic_DNA"/>
</dbReference>
<dbReference type="EMBL" id="AL513382">
    <property type="protein sequence ID" value="CAD02794.1"/>
    <property type="molecule type" value="Genomic_DNA"/>
</dbReference>
<dbReference type="RefSeq" id="NP_457120.1">
    <property type="nucleotide sequence ID" value="NC_003198.1"/>
</dbReference>
<dbReference type="RefSeq" id="WP_000188410.1">
    <property type="nucleotide sequence ID" value="NZ_WSUR01000007.1"/>
</dbReference>
<dbReference type="KEGG" id="stt:t0265"/>
<dbReference type="KEGG" id="sty:STY2838"/>
<dbReference type="PATRIC" id="fig|220341.7.peg.2887"/>
<dbReference type="eggNOG" id="COG1280">
    <property type="taxonomic scope" value="Bacteria"/>
</dbReference>
<dbReference type="HOGENOM" id="CLU_079569_1_2_6"/>
<dbReference type="OMA" id="NPKAWIM"/>
<dbReference type="OrthoDB" id="9812084at2"/>
<dbReference type="Proteomes" id="UP000000541">
    <property type="component" value="Chromosome"/>
</dbReference>
<dbReference type="Proteomes" id="UP000002670">
    <property type="component" value="Chromosome"/>
</dbReference>
<dbReference type="GO" id="GO:0005886">
    <property type="term" value="C:plasma membrane"/>
    <property type="evidence" value="ECO:0007669"/>
    <property type="project" value="UniProtKB-SubCell"/>
</dbReference>
<dbReference type="GO" id="GO:0015171">
    <property type="term" value="F:amino acid transmembrane transporter activity"/>
    <property type="evidence" value="ECO:0007669"/>
    <property type="project" value="TreeGrafter"/>
</dbReference>
<dbReference type="GO" id="GO:0033228">
    <property type="term" value="P:cysteine export across plasma membrane"/>
    <property type="evidence" value="ECO:0007669"/>
    <property type="project" value="TreeGrafter"/>
</dbReference>
<dbReference type="InterPro" id="IPR001123">
    <property type="entry name" value="LeuE-type"/>
</dbReference>
<dbReference type="NCBIfam" id="NF007653">
    <property type="entry name" value="PRK10323.1"/>
    <property type="match status" value="1"/>
</dbReference>
<dbReference type="PANTHER" id="PTHR30086">
    <property type="entry name" value="ARGININE EXPORTER PROTEIN ARGO"/>
    <property type="match status" value="1"/>
</dbReference>
<dbReference type="PANTHER" id="PTHR30086:SF20">
    <property type="entry name" value="ARGININE EXPORTER PROTEIN ARGO-RELATED"/>
    <property type="match status" value="1"/>
</dbReference>
<dbReference type="Pfam" id="PF01810">
    <property type="entry name" value="LysE"/>
    <property type="match status" value="1"/>
</dbReference>
<evidence type="ECO:0000250" key="1">
    <source>
        <dbReference type="UniProtKB" id="P38101"/>
    </source>
</evidence>
<evidence type="ECO:0000255" key="2"/>
<evidence type="ECO:0000305" key="3"/>
<accession>Q8Z4J7</accession>
<accession>Q7CBN2</accession>
<feature type="chain" id="PRO_0000318730" description="Cysteine/O-acetylserine efflux protein">
    <location>
        <begin position="1"/>
        <end position="195"/>
    </location>
</feature>
<feature type="topological domain" description="Periplasmic" evidence="2">
    <location>
        <begin position="1"/>
        <end position="9"/>
    </location>
</feature>
<feature type="transmembrane region" description="Helical" evidence="2">
    <location>
        <begin position="10"/>
        <end position="32"/>
    </location>
</feature>
<feature type="topological domain" description="Cytoplasmic" evidence="2">
    <location>
        <begin position="33"/>
        <end position="46"/>
    </location>
</feature>
<feature type="transmembrane region" description="Helical" evidence="2">
    <location>
        <begin position="47"/>
        <end position="67"/>
    </location>
</feature>
<feature type="topological domain" description="Periplasmic" evidence="2">
    <location>
        <begin position="68"/>
        <end position="69"/>
    </location>
</feature>
<feature type="transmembrane region" description="Helical" evidence="2">
    <location>
        <begin position="70"/>
        <end position="90"/>
    </location>
</feature>
<feature type="topological domain" description="Cytoplasmic" evidence="2">
    <location>
        <begin position="91"/>
        <end position="104"/>
    </location>
</feature>
<feature type="transmembrane region" description="Helical" evidence="2">
    <location>
        <begin position="105"/>
        <end position="125"/>
    </location>
</feature>
<feature type="topological domain" description="Periplasmic" evidence="2">
    <location>
        <begin position="126"/>
        <end position="141"/>
    </location>
</feature>
<feature type="transmembrane region" description="Helical" evidence="2">
    <location>
        <begin position="142"/>
        <end position="162"/>
    </location>
</feature>
<feature type="topological domain" description="Cytoplasmic" evidence="2">
    <location>
        <begin position="163"/>
        <end position="176"/>
    </location>
</feature>
<feature type="transmembrane region" description="Helical" evidence="2">
    <location>
        <begin position="177"/>
        <end position="194"/>
    </location>
</feature>
<feature type="topological domain" description="Periplasmic" evidence="1">
    <location>
        <position position="195"/>
    </location>
</feature>